<proteinExistence type="inferred from homology"/>
<accession>Q06SG6</accession>
<feature type="chain" id="PRO_0000276579" description="Large ribosomal subunit protein uL5c">
    <location>
        <begin position="1"/>
        <end position="180"/>
    </location>
</feature>
<gene>
    <name type="primary">rpl5</name>
</gene>
<name>RK5_STIHE</name>
<geneLocation type="chloroplast"/>
<sequence>MTQRLSKLYFEQISPKLIEKFSYKNMHQVPRVEKIVINRGVGEAAQSNKVLESSLKELNLISGQKGIITRSKKAIAGFKIREKVPVGVFVTLRGDRMYSFLDRLINLALPRIRDFQGISAQSFDKYGNYSLGLEEQLMFPEIEYDKIDQLRGMDISIVTNARNSEEGLALLKEFGLPFKS</sequence>
<dbReference type="EMBL" id="DQ630521">
    <property type="protein sequence ID" value="ABF60188.1"/>
    <property type="molecule type" value="Genomic_DNA"/>
</dbReference>
<dbReference type="RefSeq" id="YP_764400.1">
    <property type="nucleotide sequence ID" value="NC_008372.1"/>
</dbReference>
<dbReference type="SMR" id="Q06SG6"/>
<dbReference type="GeneID" id="4308368"/>
<dbReference type="GO" id="GO:0009507">
    <property type="term" value="C:chloroplast"/>
    <property type="evidence" value="ECO:0007669"/>
    <property type="project" value="UniProtKB-SubCell"/>
</dbReference>
<dbReference type="GO" id="GO:1990904">
    <property type="term" value="C:ribonucleoprotein complex"/>
    <property type="evidence" value="ECO:0007669"/>
    <property type="project" value="UniProtKB-KW"/>
</dbReference>
<dbReference type="GO" id="GO:0005840">
    <property type="term" value="C:ribosome"/>
    <property type="evidence" value="ECO:0007669"/>
    <property type="project" value="UniProtKB-KW"/>
</dbReference>
<dbReference type="GO" id="GO:0019843">
    <property type="term" value="F:rRNA binding"/>
    <property type="evidence" value="ECO:0007669"/>
    <property type="project" value="UniProtKB-UniRule"/>
</dbReference>
<dbReference type="GO" id="GO:0003735">
    <property type="term" value="F:structural constituent of ribosome"/>
    <property type="evidence" value="ECO:0007669"/>
    <property type="project" value="InterPro"/>
</dbReference>
<dbReference type="GO" id="GO:0006412">
    <property type="term" value="P:translation"/>
    <property type="evidence" value="ECO:0007669"/>
    <property type="project" value="UniProtKB-UniRule"/>
</dbReference>
<dbReference type="FunFam" id="3.30.1440.10:FF:000001">
    <property type="entry name" value="50S ribosomal protein L5"/>
    <property type="match status" value="1"/>
</dbReference>
<dbReference type="Gene3D" id="3.30.1440.10">
    <property type="match status" value="1"/>
</dbReference>
<dbReference type="HAMAP" id="MF_01333_B">
    <property type="entry name" value="Ribosomal_uL5_B"/>
    <property type="match status" value="1"/>
</dbReference>
<dbReference type="InterPro" id="IPR002132">
    <property type="entry name" value="Ribosomal_uL5"/>
</dbReference>
<dbReference type="InterPro" id="IPR020930">
    <property type="entry name" value="Ribosomal_uL5_bac-type"/>
</dbReference>
<dbReference type="InterPro" id="IPR031309">
    <property type="entry name" value="Ribosomal_uL5_C"/>
</dbReference>
<dbReference type="InterPro" id="IPR020929">
    <property type="entry name" value="Ribosomal_uL5_CS"/>
</dbReference>
<dbReference type="InterPro" id="IPR022803">
    <property type="entry name" value="Ribosomal_uL5_dom_sf"/>
</dbReference>
<dbReference type="InterPro" id="IPR031310">
    <property type="entry name" value="Ribosomal_uL5_N"/>
</dbReference>
<dbReference type="NCBIfam" id="NF000585">
    <property type="entry name" value="PRK00010.1"/>
    <property type="match status" value="1"/>
</dbReference>
<dbReference type="PANTHER" id="PTHR11994">
    <property type="entry name" value="60S RIBOSOMAL PROTEIN L11-RELATED"/>
    <property type="match status" value="1"/>
</dbReference>
<dbReference type="Pfam" id="PF00281">
    <property type="entry name" value="Ribosomal_L5"/>
    <property type="match status" value="1"/>
</dbReference>
<dbReference type="Pfam" id="PF00673">
    <property type="entry name" value="Ribosomal_L5_C"/>
    <property type="match status" value="1"/>
</dbReference>
<dbReference type="PIRSF" id="PIRSF002161">
    <property type="entry name" value="Ribosomal_L5"/>
    <property type="match status" value="1"/>
</dbReference>
<dbReference type="SUPFAM" id="SSF55282">
    <property type="entry name" value="RL5-like"/>
    <property type="match status" value="1"/>
</dbReference>
<dbReference type="PROSITE" id="PS00358">
    <property type="entry name" value="RIBOSOMAL_L5"/>
    <property type="match status" value="1"/>
</dbReference>
<reference key="1">
    <citation type="journal article" date="2006" name="Mol. Genet. Genomics">
        <title>Distinctive architecture of the chloroplast genome in the chlorophycean green alga Stigeoclonium helveticum.</title>
        <authorList>
            <person name="Belanger A.-S."/>
            <person name="Brouard J.-S."/>
            <person name="Charlebois P."/>
            <person name="Otis C."/>
            <person name="Lemieux C."/>
            <person name="Turmel M."/>
        </authorList>
    </citation>
    <scope>NUCLEOTIDE SEQUENCE [LARGE SCALE GENOMIC DNA]</scope>
    <source>
        <strain>UTEX 441</strain>
    </source>
</reference>
<comment type="function">
    <text evidence="1">Binds 5S rRNA, forms part of the central protuberance of the 50S subunit.</text>
</comment>
<comment type="subunit">
    <text evidence="1">Part of the 50S ribosomal subunit; contacts the 5S rRNA.</text>
</comment>
<comment type="subcellular location">
    <subcellularLocation>
        <location>Plastid</location>
        <location>Chloroplast</location>
    </subcellularLocation>
</comment>
<comment type="similarity">
    <text evidence="2">Belongs to the universal ribosomal protein uL5 family.</text>
</comment>
<keyword id="KW-0150">Chloroplast</keyword>
<keyword id="KW-0934">Plastid</keyword>
<keyword id="KW-0687">Ribonucleoprotein</keyword>
<keyword id="KW-0689">Ribosomal protein</keyword>
<keyword id="KW-0694">RNA-binding</keyword>
<keyword id="KW-0699">rRNA-binding</keyword>
<protein>
    <recommendedName>
        <fullName evidence="2">Large ribosomal subunit protein uL5c</fullName>
    </recommendedName>
    <alternativeName>
        <fullName>50S ribosomal protein L5, chloroplastic</fullName>
    </alternativeName>
</protein>
<organism>
    <name type="scientific">Stigeoclonium helveticum</name>
    <name type="common">Green alga</name>
    <dbReference type="NCBI Taxonomy" id="55999"/>
    <lineage>
        <taxon>Eukaryota</taxon>
        <taxon>Viridiplantae</taxon>
        <taxon>Chlorophyta</taxon>
        <taxon>core chlorophytes</taxon>
        <taxon>Chlorophyceae</taxon>
        <taxon>OCC clade</taxon>
        <taxon>Chaetophorales</taxon>
        <taxon>Chaetophoraceae</taxon>
        <taxon>Stigeoclonium</taxon>
    </lineage>
</organism>
<evidence type="ECO:0000250" key="1"/>
<evidence type="ECO:0000305" key="2"/>